<keyword id="KW-0025">Alternative splicing</keyword>
<keyword id="KW-0040">ANK repeat</keyword>
<keyword id="KW-0106">Calcium</keyword>
<keyword id="KW-0107">Calcium channel</keyword>
<keyword id="KW-0109">Calcium transport</keyword>
<keyword id="KW-0407">Ion channel</keyword>
<keyword id="KW-0406">Ion transport</keyword>
<keyword id="KW-0472">Membrane</keyword>
<keyword id="KW-1185">Reference proteome</keyword>
<keyword id="KW-0677">Repeat</keyword>
<keyword id="KW-0812">Transmembrane</keyword>
<keyword id="KW-1133">Transmembrane helix</keyword>
<keyword id="KW-0813">Transport</keyword>
<sequence length="1172" mass="130531">MLMSRTDSKSGKNRSGVRMFKDGDFLTPASGESWDRLRLTCSQPFTRHQSFGLAFLRVRSSLGSLADPVVDPSAPGSSGLNQNSTDVLESDPRPWLTNPSIRRTFFPDPQTSTKEISELKGMLKQLQPGPLGRAARMVLSAARKAPPASVVSPNNSHGEPGPSRAESAEPRAEEPNRKTAVGRRKRRKVQEPRRSLSNSSSQPNRRTGRTRQRQHRPQTKSDDGGVQAAGQCPICAGFFSIETLPQHAATCGESPPPQPASPASLSSSESVLRRHHVALTPVPLVPKPQPNWTEIVNKKLKFPPTLLRAIQEGQLGLVQQLLESSSDASGAGPGGPLRNVEESEDRSWREALNLAIRLGHEVITDVLLANVKFDFRQIHEALLVAVDTNQPAVVRRLLARLEREKGRKVDTKSFSLAFFDSSIDGSRFAPGVTPLTLACQKDLYEIAQLLMDQGHTIARPHPVSCACLECSNARRYDLLKFSLSRINTYRGIASRAHLSLASEDAMLAAFQLSRELRRLARKEPEFKPQYIALESLCQDYGFELLGMCRNQSEVTAVLNDLGEDSETEPEAEGLGQAFEEGIPNLARLRLAVNYNQKQFVAHPICQQVLSSIWCGNLAGWRGSTTIWKLFVAFLIFLTMPFLCIGYWLAPKSQLGRLLKIPVLKFLLHSASYLWFLIFLLGESLVMETQLSTFKGRSQSVWETSLHMIWVTGFLWFECKEVWIEGLRSYLLDWWNFLDVVILSLYLASFALRLLLAGLAYMHCRDASDSTTCRYFTTAERSEWRTEDPQFLAEVLFAVTSMLSFTRLAYILPAHESLGTLQISIGKMIDDMIRFMFILMIILTAFLCGLNNIYVPYQESEKLGNFNETFQFLFWTMFGMEEHTVVDMPQFLVPEFVGRAMYGIFTIVMVIVLLNMLIAMITNSFQKIEDDADVEWKFARSKLYLSYFREGLTLPVPFNILPSPKAAFYLVRRIFRFLCCGSSCCKAKKSDYPPIGTFTNPGARAGSAGEGERVSYRLRVIKALVQRYIETARREFEETRRKDLGNRLTELTKTVSRLQSEVASVQKNLAAGGAPRPPDGASILSRYITRVRNSFQNLGPPTSDTPAELTMPGIVETEVSLGDGLDGTGEAGAPAPGEPGSSSSAHVLVHREQEAEGSGDLLLEGDLETKGES</sequence>
<comment type="function">
    <text evidence="3 4 5 6">Thought to form a receptor-activated non-selective calcium permeant cation channel. Probably is operated by a phosphatidylinositol second messenger system activated by receptor tyrosine kinases or G-protein coupled receptors. May also be activated by intracellular calcium store depletion. Plays a role in mediating responsivity to pheromones that elicit aggressive and mating behaviors. Required for response to the Esp1 pheromone which enhances female sexual receptive behavior and to the Esp22 pheromone which inhibits adult male mating behavior.</text>
</comment>
<comment type="subcellular location">
    <subcellularLocation>
        <location evidence="9">Membrane</location>
        <topology evidence="9">Multi-pass membrane protein</topology>
    </subcellularLocation>
</comment>
<comment type="alternative products">
    <event type="alternative splicing"/>
    <isoform>
        <id>Q9R244-1</id>
        <name>1</name>
        <name>A</name>
        <sequence type="displayed"/>
    </isoform>
    <isoform>
        <id>Q9R244-2</id>
        <name>2</name>
        <name>B</name>
        <sequence type="described" ref="VSP_006562"/>
    </isoform>
    <isoform>
        <id>Q9R244-3</id>
        <name>3</name>
        <name>Alpha</name>
        <sequence type="described" ref="VSP_006564"/>
    </isoform>
    <isoform>
        <id>Q9R244-4</id>
        <name>4</name>
        <name>Beta</name>
        <sequence type="described" ref="VSP_006563 VSP_006565"/>
    </isoform>
</comment>
<comment type="tissue specificity">
    <text>Isoform 3 is ubiquitously expressed at low levels. Isoform 4 is expressed exclusively in vomeronasal organ.</text>
</comment>
<comment type="disruption phenotype">
    <text evidence="3 4 5 6">Reduced electrophysiological response to pheromone mixtures in the vomeronasal organ. Mutant males and nursing females are docile and fail to initiate aggressive attacks on intruder males. Males display normal mating behavior towards females but display increased sexual behavior towards prepubescent females even when presented simultaneously with adult estrus females and also show increased sexual behavior towards juvenile and adult males. Lack of response to Esp1.</text>
</comment>
<comment type="similarity">
    <text evidence="9">Belongs to the transient receptor (TC 1.A.4) family. STrpC subfamily. TRPC2 sub-subfamily.</text>
</comment>
<reference key="1">
    <citation type="journal article" date="1999" name="Proc. Natl. Acad. Sci. U.S.A.">
        <title>Mouse trp2, the homologue of the human trpc2 pseudogene, encodes mTrp2, a store depletion-activated capacitative Ca2+ entry channel.</title>
        <authorList>
            <person name="Vannier B."/>
            <person name="Peyton M."/>
            <person name="Boulay G."/>
            <person name="Brown D."/>
            <person name="Qin N."/>
            <person name="Jiang M."/>
            <person name="Zhu X."/>
            <person name="Birnbaumer L."/>
        </authorList>
    </citation>
    <scope>NUCLEOTIDE SEQUENCE [MRNA] (ISOFORMS 1 AND 2)</scope>
    <source>
        <tissue>Testis</tissue>
    </source>
</reference>
<reference key="2">
    <citation type="journal article" date="2000" name="Biochem. J.">
        <title>Cloning, expression and subcellular localization of two novel splice variants of mouse transient receptor potential channel 2.</title>
        <authorList>
            <person name="Hofmann T."/>
            <person name="Schaefer M."/>
            <person name="Schultz G."/>
            <person name="Gudermann T."/>
        </authorList>
    </citation>
    <scope>NUCLEOTIDE SEQUENCE [MRNA] (ISOFORMS 3 AND 4)</scope>
</reference>
<reference key="3">
    <citation type="journal article" date="2002" name="Proc. Natl. Acad. Sci. U.S.A.">
        <title>Altered sexual and social behaviors in trp2 mutant mice.</title>
        <authorList>
            <person name="Leypold B.G."/>
            <person name="Yu C.R."/>
            <person name="Leinders-Zufall T."/>
            <person name="Kim M.M."/>
            <person name="Zufall F."/>
            <person name="Axel R."/>
        </authorList>
    </citation>
    <scope>FUNCTION</scope>
    <scope>DISRUPTION PHENOTYPE</scope>
</reference>
<reference key="4">
    <citation type="journal article" date="2002" name="Science">
        <title>Loss of sex discrimination and male-male aggression in mice deficient for TRP2.</title>
        <authorList>
            <person name="Stowers L."/>
            <person name="Holy T.E."/>
            <person name="Meister M."/>
            <person name="Dulac C."/>
            <person name="Koentges G."/>
        </authorList>
    </citation>
    <scope>FUNCTION</scope>
    <scope>DISRUPTION PHENOTYPE</scope>
</reference>
<reference key="5">
    <citation type="journal article" date="2010" name="Nature">
        <title>The male mouse pheromone ESP1 enhances female sexual receptive behaviour through a specific vomeronasal receptor.</title>
        <authorList>
            <person name="Haga S."/>
            <person name="Hattori T."/>
            <person name="Sato T."/>
            <person name="Sato K."/>
            <person name="Matsuda S."/>
            <person name="Kobayakawa R."/>
            <person name="Sakano H."/>
            <person name="Yoshihara Y."/>
            <person name="Kikusui T."/>
            <person name="Touhara K."/>
        </authorList>
    </citation>
    <scope>FUNCTION</scope>
    <scope>DISRUPTION PHENOTYPE</scope>
</reference>
<reference key="6">
    <citation type="journal article" date="2013" name="Nature">
        <title>A juvenile mouse pheromone inhibits sexual behaviour through the vomeronasal system.</title>
        <authorList>
            <person name="Ferrero D.M."/>
            <person name="Moeller L.M."/>
            <person name="Osakada T."/>
            <person name="Horio N."/>
            <person name="Li Q."/>
            <person name="Roy D.S."/>
            <person name="Cichy A."/>
            <person name="Spehr M."/>
            <person name="Touhara K."/>
            <person name="Liberles S.D."/>
        </authorList>
    </citation>
    <scope>FUNCTION</scope>
    <scope>DISRUPTION PHENOTYPE</scope>
</reference>
<protein>
    <recommendedName>
        <fullName>Short transient receptor potential channel 2</fullName>
        <shortName>TrpC2</shortName>
    </recommendedName>
    <alternativeName>
        <fullName>Transient receptor protein 2</fullName>
        <shortName>TRP-2</shortName>
        <shortName>mTrp2</shortName>
    </alternativeName>
</protein>
<gene>
    <name type="primary">Trpc2</name>
    <name type="synonym">Trp2</name>
    <name type="synonym">Trrp2</name>
</gene>
<proteinExistence type="evidence at transcript level"/>
<accession>Q9R244</accession>
<accession>Q9ES59</accession>
<accession>Q9ES60</accession>
<accession>Q9R243</accession>
<dbReference type="EMBL" id="AF111108">
    <property type="protein sequence ID" value="AAD17196.1"/>
    <property type="molecule type" value="mRNA"/>
</dbReference>
<dbReference type="EMBL" id="AF111107">
    <property type="protein sequence ID" value="AAD17195.1"/>
    <property type="molecule type" value="mRNA"/>
</dbReference>
<dbReference type="EMBL" id="AF230803">
    <property type="protein sequence ID" value="AAG29951.1"/>
    <property type="molecule type" value="mRNA"/>
</dbReference>
<dbReference type="EMBL" id="AF230802">
    <property type="protein sequence ID" value="AAG29950.1"/>
    <property type="molecule type" value="mRNA"/>
</dbReference>
<dbReference type="CCDS" id="CCDS52333.1">
    <molecule id="Q9R244-4"/>
</dbReference>
<dbReference type="RefSeq" id="NP_001103367.1">
    <molecule id="Q9R244-4"/>
    <property type="nucleotide sequence ID" value="NM_001109897.2"/>
</dbReference>
<dbReference type="SMR" id="Q9R244"/>
<dbReference type="BioGRID" id="204328">
    <property type="interactions" value="1"/>
</dbReference>
<dbReference type="CORUM" id="Q9R244"/>
<dbReference type="DIP" id="DIP-61090N"/>
<dbReference type="FunCoup" id="Q9R244">
    <property type="interactions" value="7"/>
</dbReference>
<dbReference type="IntAct" id="Q9R244">
    <property type="interactions" value="2"/>
</dbReference>
<dbReference type="STRING" id="10090.ENSMUSP00000081903"/>
<dbReference type="iPTMnet" id="Q9R244"/>
<dbReference type="PhosphoSitePlus" id="Q9R244"/>
<dbReference type="PaxDb" id="10090-ENSMUSP00000081903"/>
<dbReference type="DNASU" id="22064"/>
<dbReference type="Ensembl" id="ENSMUST00000124189.3">
    <molecule id="Q9R244-4"/>
    <property type="protein sequence ID" value="ENSMUSP00000116934.3"/>
    <property type="gene ID" value="ENSMUSG00000100254.2"/>
</dbReference>
<dbReference type="GeneID" id="22064"/>
<dbReference type="KEGG" id="mmu:22064"/>
<dbReference type="UCSC" id="uc009iqm.2">
    <molecule id="Q9R244-3"/>
    <property type="organism name" value="mouse"/>
</dbReference>
<dbReference type="UCSC" id="uc009iqn.2">
    <molecule id="Q9R244-2"/>
    <property type="organism name" value="mouse"/>
</dbReference>
<dbReference type="UCSC" id="uc012fqr.2">
    <molecule id="Q9R244-1"/>
    <property type="organism name" value="mouse"/>
</dbReference>
<dbReference type="UCSC" id="uc012fqs.2">
    <molecule id="Q9R244-4"/>
    <property type="organism name" value="mouse"/>
</dbReference>
<dbReference type="AGR" id="MGI:109527"/>
<dbReference type="CTD" id="7221"/>
<dbReference type="MGI" id="MGI:109527">
    <property type="gene designation" value="Trpc2"/>
</dbReference>
<dbReference type="VEuPathDB" id="HostDB:ENSMUSG00000100254"/>
<dbReference type="eggNOG" id="KOG3609">
    <property type="taxonomic scope" value="Eukaryota"/>
</dbReference>
<dbReference type="HOGENOM" id="CLU_005716_2_0_1"/>
<dbReference type="InParanoid" id="Q9R244"/>
<dbReference type="OMA" id="MIDDMMF"/>
<dbReference type="OrthoDB" id="25840at2759"/>
<dbReference type="PhylomeDB" id="Q9R244"/>
<dbReference type="BioGRID-ORCS" id="22064">
    <property type="hits" value="2 hits in 80 CRISPR screens"/>
</dbReference>
<dbReference type="ChiTaRS" id="Dct">
    <property type="organism name" value="mouse"/>
</dbReference>
<dbReference type="PRO" id="PR:Q9R244"/>
<dbReference type="Proteomes" id="UP000000589">
    <property type="component" value="Chromosome 7"/>
</dbReference>
<dbReference type="RNAct" id="Q9R244">
    <property type="molecule type" value="protein"/>
</dbReference>
<dbReference type="Bgee" id="ENSMUSG00000100254">
    <property type="expression patterns" value="Expressed in mesentery of urinary system and 45 other cell types or tissues"/>
</dbReference>
<dbReference type="GO" id="GO:0032590">
    <property type="term" value="C:dendrite membrane"/>
    <property type="evidence" value="ECO:0000315"/>
    <property type="project" value="MGI"/>
</dbReference>
<dbReference type="GO" id="GO:0012505">
    <property type="term" value="C:endomembrane system"/>
    <property type="evidence" value="ECO:0000314"/>
    <property type="project" value="MGI"/>
</dbReference>
<dbReference type="GO" id="GO:0005789">
    <property type="term" value="C:endoplasmic reticulum membrane"/>
    <property type="evidence" value="ECO:0000314"/>
    <property type="project" value="MGI"/>
</dbReference>
<dbReference type="GO" id="GO:0000139">
    <property type="term" value="C:Golgi membrane"/>
    <property type="evidence" value="ECO:0000314"/>
    <property type="project" value="MGI"/>
</dbReference>
<dbReference type="GO" id="GO:0005635">
    <property type="term" value="C:nuclear envelope"/>
    <property type="evidence" value="ECO:0000314"/>
    <property type="project" value="MGI"/>
</dbReference>
<dbReference type="GO" id="GO:0005634">
    <property type="term" value="C:nucleus"/>
    <property type="evidence" value="ECO:0007669"/>
    <property type="project" value="InterPro"/>
</dbReference>
<dbReference type="GO" id="GO:0005886">
    <property type="term" value="C:plasma membrane"/>
    <property type="evidence" value="ECO:0000314"/>
    <property type="project" value="MGI"/>
</dbReference>
<dbReference type="GO" id="GO:0005516">
    <property type="term" value="F:calmodulin binding"/>
    <property type="evidence" value="ECO:0000314"/>
    <property type="project" value="MGI"/>
</dbReference>
<dbReference type="GO" id="GO:0003684">
    <property type="term" value="F:damaged DNA binding"/>
    <property type="evidence" value="ECO:0007669"/>
    <property type="project" value="InterPro"/>
</dbReference>
<dbReference type="GO" id="GO:0019992">
    <property type="term" value="F:diacylglycerol binding"/>
    <property type="evidence" value="ECO:0000315"/>
    <property type="project" value="MGI"/>
</dbReference>
<dbReference type="GO" id="GO:0070679">
    <property type="term" value="F:inositol 1,4,5 trisphosphate binding"/>
    <property type="evidence" value="ECO:0000314"/>
    <property type="project" value="BHF-UCL"/>
</dbReference>
<dbReference type="GO" id="GO:0015279">
    <property type="term" value="F:store-operated calcium channel activity"/>
    <property type="evidence" value="ECO:0000314"/>
    <property type="project" value="MGI"/>
</dbReference>
<dbReference type="GO" id="GO:0007340">
    <property type="term" value="P:acrosome reaction"/>
    <property type="evidence" value="ECO:0000315"/>
    <property type="project" value="MGI"/>
</dbReference>
<dbReference type="GO" id="GO:0002118">
    <property type="term" value="P:aggressive behavior"/>
    <property type="evidence" value="ECO:0000315"/>
    <property type="project" value="MGI"/>
</dbReference>
<dbReference type="GO" id="GO:0006816">
    <property type="term" value="P:calcium ion transport"/>
    <property type="evidence" value="ECO:0000315"/>
    <property type="project" value="MGI"/>
</dbReference>
<dbReference type="GO" id="GO:0008050">
    <property type="term" value="P:female courtship behavior"/>
    <property type="evidence" value="ECO:0000315"/>
    <property type="project" value="MGI"/>
</dbReference>
<dbReference type="GO" id="GO:0002121">
    <property type="term" value="P:inter-male aggressive behavior"/>
    <property type="evidence" value="ECO:0000315"/>
    <property type="project" value="MGI"/>
</dbReference>
<dbReference type="GO" id="GO:0048047">
    <property type="term" value="P:mating behavior, sex discrimination"/>
    <property type="evidence" value="ECO:0000315"/>
    <property type="project" value="MGI"/>
</dbReference>
<dbReference type="GO" id="GO:1902436">
    <property type="term" value="P:negative regulation of male mating behavior"/>
    <property type="evidence" value="ECO:0000316"/>
    <property type="project" value="MGI"/>
</dbReference>
<dbReference type="GO" id="GO:0007204">
    <property type="term" value="P:positive regulation of cytosolic calcium ion concentration"/>
    <property type="evidence" value="ECO:0000353"/>
    <property type="project" value="MGI"/>
</dbReference>
<dbReference type="GO" id="GO:0010468">
    <property type="term" value="P:regulation of gene expression"/>
    <property type="evidence" value="ECO:0000315"/>
    <property type="project" value="MGI"/>
</dbReference>
<dbReference type="GO" id="GO:0019236">
    <property type="term" value="P:response to pheromone"/>
    <property type="evidence" value="ECO:0000315"/>
    <property type="project" value="MGI"/>
</dbReference>
<dbReference type="GO" id="GO:0000012">
    <property type="term" value="P:single strand break repair"/>
    <property type="evidence" value="ECO:0007669"/>
    <property type="project" value="InterPro"/>
</dbReference>
<dbReference type="GO" id="GO:0002124">
    <property type="term" value="P:territorial aggressive behavior"/>
    <property type="evidence" value="ECO:0000315"/>
    <property type="project" value="MGI"/>
</dbReference>
<dbReference type="FunFam" id="1.25.40.20:FF:000222">
    <property type="entry name" value="Short transient receptor potential channel 2 homolog"/>
    <property type="match status" value="1"/>
</dbReference>
<dbReference type="FunFam" id="2.60.120.260:FF:000167">
    <property type="entry name" value="Transient receptor potential cation channel subfamily C member 2 (pseudogene)"/>
    <property type="match status" value="1"/>
</dbReference>
<dbReference type="Gene3D" id="1.25.40.20">
    <property type="entry name" value="Ankyrin repeat-containing domain"/>
    <property type="match status" value="1"/>
</dbReference>
<dbReference type="Gene3D" id="2.60.120.260">
    <property type="entry name" value="Galactose-binding domain-like"/>
    <property type="match status" value="1"/>
</dbReference>
<dbReference type="InterPro" id="IPR036770">
    <property type="entry name" value="Ankyrin_rpt-contain_sf"/>
</dbReference>
<dbReference type="InterPro" id="IPR008979">
    <property type="entry name" value="Galactose-bd-like_sf"/>
</dbReference>
<dbReference type="InterPro" id="IPR005821">
    <property type="entry name" value="Ion_trans_dom"/>
</dbReference>
<dbReference type="InterPro" id="IPR013555">
    <property type="entry name" value="TRP_dom"/>
</dbReference>
<dbReference type="InterPro" id="IPR005458">
    <property type="entry name" value="TRPC2_channel"/>
</dbReference>
<dbReference type="InterPro" id="IPR002153">
    <property type="entry name" value="TRPC_channel"/>
</dbReference>
<dbReference type="InterPro" id="IPR002706">
    <property type="entry name" value="Xrcc1_N"/>
</dbReference>
<dbReference type="PANTHER" id="PTHR10117:SF6">
    <property type="entry name" value="SHORT TRANSIENT RECEPTOR POTENTIAL CHANNEL 2"/>
    <property type="match status" value="1"/>
</dbReference>
<dbReference type="PANTHER" id="PTHR10117">
    <property type="entry name" value="TRANSIENT RECEPTOR POTENTIAL CHANNEL"/>
    <property type="match status" value="1"/>
</dbReference>
<dbReference type="Pfam" id="PF00520">
    <property type="entry name" value="Ion_trans"/>
    <property type="match status" value="1"/>
</dbReference>
<dbReference type="Pfam" id="PF08344">
    <property type="entry name" value="TRP_2"/>
    <property type="match status" value="1"/>
</dbReference>
<dbReference type="Pfam" id="PF01834">
    <property type="entry name" value="XRCC1_N"/>
    <property type="match status" value="1"/>
</dbReference>
<dbReference type="PRINTS" id="PR01097">
    <property type="entry name" value="TRNSRECEPTRP"/>
</dbReference>
<dbReference type="PRINTS" id="PR01643">
    <property type="entry name" value="TRPCHANNEL2"/>
</dbReference>
<dbReference type="SMART" id="SM01420">
    <property type="entry name" value="TRP_2"/>
    <property type="match status" value="1"/>
</dbReference>
<dbReference type="SUPFAM" id="SSF48403">
    <property type="entry name" value="Ankyrin repeat"/>
    <property type="match status" value="1"/>
</dbReference>
<dbReference type="SUPFAM" id="SSF49785">
    <property type="entry name" value="Galactose-binding domain-like"/>
    <property type="match status" value="1"/>
</dbReference>
<name>TRPC2_MOUSE</name>
<organism>
    <name type="scientific">Mus musculus</name>
    <name type="common">Mouse</name>
    <dbReference type="NCBI Taxonomy" id="10090"/>
    <lineage>
        <taxon>Eukaryota</taxon>
        <taxon>Metazoa</taxon>
        <taxon>Chordata</taxon>
        <taxon>Craniata</taxon>
        <taxon>Vertebrata</taxon>
        <taxon>Euteleostomi</taxon>
        <taxon>Mammalia</taxon>
        <taxon>Eutheria</taxon>
        <taxon>Euarchontoglires</taxon>
        <taxon>Glires</taxon>
        <taxon>Rodentia</taxon>
        <taxon>Myomorpha</taxon>
        <taxon>Muroidea</taxon>
        <taxon>Muridae</taxon>
        <taxon>Murinae</taxon>
        <taxon>Mus</taxon>
        <taxon>Mus</taxon>
    </lineage>
</organism>
<feature type="chain" id="PRO_0000215307" description="Short transient receptor potential channel 2">
    <location>
        <begin position="1"/>
        <end position="1172"/>
    </location>
</feature>
<feature type="topological domain" description="Cytoplasmic" evidence="1">
    <location>
        <begin position="1"/>
        <end position="659"/>
    </location>
</feature>
<feature type="transmembrane region" description="Helical" evidence="1">
    <location>
        <begin position="660"/>
        <end position="680"/>
    </location>
</feature>
<feature type="topological domain" description="Extracellular" evidence="1">
    <location>
        <begin position="681"/>
        <end position="702"/>
    </location>
</feature>
<feature type="transmembrane region" description="Helical" evidence="1">
    <location>
        <begin position="703"/>
        <end position="723"/>
    </location>
</feature>
<feature type="topological domain" description="Cytoplasmic" evidence="1">
    <location>
        <begin position="724"/>
        <end position="738"/>
    </location>
</feature>
<feature type="transmembrane region" description="Helical" evidence="1">
    <location>
        <begin position="739"/>
        <end position="759"/>
    </location>
</feature>
<feature type="topological domain" description="Extracellular" evidence="1">
    <location>
        <begin position="760"/>
        <end position="789"/>
    </location>
</feature>
<feature type="transmembrane region" description="Helical" evidence="1">
    <location>
        <begin position="790"/>
        <end position="810"/>
    </location>
</feature>
<feature type="topological domain" description="Cytoplasmic" evidence="1">
    <location>
        <begin position="811"/>
        <end position="833"/>
    </location>
</feature>
<feature type="transmembrane region" description="Helical" evidence="1">
    <location>
        <begin position="834"/>
        <end position="854"/>
    </location>
</feature>
<feature type="topological domain" description="Extracellular" evidence="1">
    <location>
        <begin position="855"/>
        <end position="899"/>
    </location>
</feature>
<feature type="transmembrane region" description="Helical" evidence="1">
    <location>
        <begin position="900"/>
        <end position="920"/>
    </location>
</feature>
<feature type="topological domain" description="Cytoplasmic" evidence="1">
    <location>
        <begin position="921"/>
        <end position="1172"/>
    </location>
</feature>
<feature type="repeat" description="ANK 1">
    <location>
        <begin position="301"/>
        <end position="330"/>
    </location>
</feature>
<feature type="repeat" description="ANK 2">
    <location>
        <begin position="377"/>
        <end position="406"/>
    </location>
</feature>
<feature type="repeat" description="ANK 3">
    <location>
        <begin position="430"/>
        <end position="459"/>
    </location>
</feature>
<feature type="region of interest" description="Disordered" evidence="2">
    <location>
        <begin position="1"/>
        <end position="22"/>
    </location>
</feature>
<feature type="region of interest" description="Disordered" evidence="2">
    <location>
        <begin position="69"/>
        <end position="98"/>
    </location>
</feature>
<feature type="region of interest" description="Disordered" evidence="2">
    <location>
        <begin position="140"/>
        <end position="227"/>
    </location>
</feature>
<feature type="region of interest" description="Disordered" evidence="2">
    <location>
        <begin position="249"/>
        <end position="271"/>
    </location>
</feature>
<feature type="region of interest" description="Disordered" evidence="2">
    <location>
        <begin position="1118"/>
        <end position="1172"/>
    </location>
</feature>
<feature type="compositionally biased region" description="Basic and acidic residues" evidence="2">
    <location>
        <begin position="1"/>
        <end position="10"/>
    </location>
</feature>
<feature type="compositionally biased region" description="Polar residues" evidence="2">
    <location>
        <begin position="75"/>
        <end position="87"/>
    </location>
</feature>
<feature type="compositionally biased region" description="Basic and acidic residues" evidence="2">
    <location>
        <begin position="166"/>
        <end position="177"/>
    </location>
</feature>
<feature type="compositionally biased region" description="Polar residues" evidence="2">
    <location>
        <begin position="195"/>
        <end position="204"/>
    </location>
</feature>
<feature type="compositionally biased region" description="Basic residues" evidence="2">
    <location>
        <begin position="206"/>
        <end position="218"/>
    </location>
</feature>
<feature type="compositionally biased region" description="Low complexity" evidence="2">
    <location>
        <begin position="261"/>
        <end position="270"/>
    </location>
</feature>
<feature type="compositionally biased region" description="Low complexity" evidence="2">
    <location>
        <begin position="1130"/>
        <end position="1144"/>
    </location>
</feature>
<feature type="splice variant" id="VSP_006562" description="In isoform 2." evidence="7">
    <original>MLMSRTDSKSGKNRSGVRMFKDGDFLTPASGESWDRLRLTCSQPFTRHQSFGLAFLRVRSSLGSLADPVVDPSAPGSSGLNQNSTDVLESDPRPWLTNPSIRRTFFPDPQT</original>
    <variation>MGTKTHPVVPW</variation>
    <location>
        <begin position="1"/>
        <end position="111"/>
    </location>
</feature>
<feature type="splice variant" id="VSP_006564" description="In isoform 3." evidence="8">
    <location>
        <begin position="2"/>
        <end position="287"/>
    </location>
</feature>
<feature type="splice variant" id="VSP_006563" description="In isoform 4." evidence="8">
    <location>
        <begin position="2"/>
        <end position="283"/>
    </location>
</feature>
<feature type="splice variant" id="VSP_006565" description="In isoform 4." evidence="8">
    <original>LVPK</original>
    <variation>DPLS</variation>
    <location>
        <begin position="284"/>
        <end position="287"/>
    </location>
</feature>
<feature type="sequence conflict" description="In Ref. 1; AAD17195/AAD17196." evidence="9" ref="1">
    <original>K</original>
    <variation>R</variation>
    <location>
        <position position="628"/>
    </location>
</feature>
<feature type="sequence conflict" description="In Ref. 1; AAD17195/AAD17196." evidence="9" ref="1">
    <original>F</original>
    <variation>S</variation>
    <location>
        <position position="633"/>
    </location>
</feature>
<feature type="sequence conflict" description="In Ref. 2; AAG29951/AAG29950." evidence="9" ref="2">
    <original>Q</original>
    <variation>R</variation>
    <location>
        <position position="653"/>
    </location>
</feature>
<feature type="sequence conflict" description="In Ref. 1; AAD17195/AAD17196." evidence="9" ref="1">
    <original>Y</original>
    <variation>C</variation>
    <location>
        <position position="774"/>
    </location>
</feature>
<feature type="sequence conflict" description="In Ref. 1; AAD17195/AAD17196." evidence="9" ref="1">
    <original>A</original>
    <variation>T</variation>
    <location>
        <position position="797"/>
    </location>
</feature>
<feature type="sequence conflict" description="In Ref. 2; AAG29951/AAG29950." evidence="9" ref="2">
    <original>L</original>
    <variation>P</variation>
    <location>
        <position position="1161"/>
    </location>
</feature>
<evidence type="ECO:0000255" key="1"/>
<evidence type="ECO:0000256" key="2">
    <source>
        <dbReference type="SAM" id="MobiDB-lite"/>
    </source>
</evidence>
<evidence type="ECO:0000269" key="3">
    <source>
    </source>
</evidence>
<evidence type="ECO:0000269" key="4">
    <source>
    </source>
</evidence>
<evidence type="ECO:0000269" key="5">
    <source>
    </source>
</evidence>
<evidence type="ECO:0000269" key="6">
    <source>
    </source>
</evidence>
<evidence type="ECO:0000303" key="7">
    <source>
    </source>
</evidence>
<evidence type="ECO:0000303" key="8">
    <source>
    </source>
</evidence>
<evidence type="ECO:0000305" key="9"/>